<reference key="1">
    <citation type="journal article" date="2007" name="BMC Microbiol.">
        <title>Subtle genetic changes enhance virulence of methicillin resistant and sensitive Staphylococcus aureus.</title>
        <authorList>
            <person name="Highlander S.K."/>
            <person name="Hulten K.G."/>
            <person name="Qin X."/>
            <person name="Jiang H."/>
            <person name="Yerrapragada S."/>
            <person name="Mason E.O. Jr."/>
            <person name="Shang Y."/>
            <person name="Williams T.M."/>
            <person name="Fortunov R.M."/>
            <person name="Liu Y."/>
            <person name="Igboeli O."/>
            <person name="Petrosino J."/>
            <person name="Tirumalai M."/>
            <person name="Uzman A."/>
            <person name="Fox G.E."/>
            <person name="Cardenas A.M."/>
            <person name="Muzny D.M."/>
            <person name="Hemphill L."/>
            <person name="Ding Y."/>
            <person name="Dugan S."/>
            <person name="Blyth P.R."/>
            <person name="Buhay C.J."/>
            <person name="Dinh H.H."/>
            <person name="Hawes A.C."/>
            <person name="Holder M."/>
            <person name="Kovar C.L."/>
            <person name="Lee S.L."/>
            <person name="Liu W."/>
            <person name="Nazareth L.V."/>
            <person name="Wang Q."/>
            <person name="Zhou J."/>
            <person name="Kaplan S.L."/>
            <person name="Weinstock G.M."/>
        </authorList>
    </citation>
    <scope>NUCLEOTIDE SEQUENCE [LARGE SCALE GENOMIC DNA]</scope>
    <source>
        <strain>USA300 / TCH1516</strain>
    </source>
</reference>
<name>MRAY_STAAT</name>
<protein>
    <recommendedName>
        <fullName evidence="1">Phospho-N-acetylmuramoyl-pentapeptide-transferase</fullName>
        <ecNumber evidence="1">2.7.8.13</ecNumber>
    </recommendedName>
    <alternativeName>
        <fullName evidence="1">UDP-MurNAc-pentapeptide phosphotransferase</fullName>
    </alternativeName>
</protein>
<accession>A8Z3M3</accession>
<comment type="function">
    <text evidence="1">Catalyzes the initial step of the lipid cycle reactions in the biosynthesis of the cell wall peptidoglycan: transfers peptidoglycan precursor phospho-MurNAc-pentapeptide from UDP-MurNAc-pentapeptide onto the lipid carrier undecaprenyl phosphate, yielding undecaprenyl-pyrophosphoryl-MurNAc-pentapeptide, known as lipid I.</text>
</comment>
<comment type="catalytic activity">
    <reaction evidence="1">
        <text>UDP-N-acetyl-alpha-D-muramoyl-L-alanyl-gamma-D-glutamyl-L-lysyl-D-alanyl-D-alanine + di-trans,octa-cis-undecaprenyl phosphate = Mur2Ac(oyl-L-Ala-gamma-D-Glu-L-Lys-D-Ala-D-Ala)-di-trans,octa-cis-undecaprenyl diphosphate + UMP</text>
        <dbReference type="Rhea" id="RHEA:21920"/>
        <dbReference type="ChEBI" id="CHEBI:57865"/>
        <dbReference type="ChEBI" id="CHEBI:60032"/>
        <dbReference type="ChEBI" id="CHEBI:60392"/>
        <dbReference type="ChEBI" id="CHEBI:70758"/>
        <dbReference type="EC" id="2.7.8.13"/>
    </reaction>
</comment>
<comment type="cofactor">
    <cofactor evidence="1">
        <name>Mg(2+)</name>
        <dbReference type="ChEBI" id="CHEBI:18420"/>
    </cofactor>
</comment>
<comment type="pathway">
    <text evidence="1">Cell wall biogenesis; peptidoglycan biosynthesis.</text>
</comment>
<comment type="subcellular location">
    <subcellularLocation>
        <location evidence="1">Cell membrane</location>
        <topology evidence="1">Multi-pass membrane protein</topology>
    </subcellularLocation>
</comment>
<comment type="similarity">
    <text evidence="1">Belongs to the glycosyltransferase 4 family. MraY subfamily.</text>
</comment>
<gene>
    <name evidence="1" type="primary">mraY</name>
    <name type="ordered locus">USA300HOU_1122</name>
</gene>
<keyword id="KW-0131">Cell cycle</keyword>
<keyword id="KW-0132">Cell division</keyword>
<keyword id="KW-1003">Cell membrane</keyword>
<keyword id="KW-0133">Cell shape</keyword>
<keyword id="KW-0961">Cell wall biogenesis/degradation</keyword>
<keyword id="KW-0460">Magnesium</keyword>
<keyword id="KW-0472">Membrane</keyword>
<keyword id="KW-0479">Metal-binding</keyword>
<keyword id="KW-0573">Peptidoglycan synthesis</keyword>
<keyword id="KW-0808">Transferase</keyword>
<keyword id="KW-0812">Transmembrane</keyword>
<keyword id="KW-1133">Transmembrane helix</keyword>
<evidence type="ECO:0000255" key="1">
    <source>
        <dbReference type="HAMAP-Rule" id="MF_00038"/>
    </source>
</evidence>
<dbReference type="EC" id="2.7.8.13" evidence="1"/>
<dbReference type="EMBL" id="CP000730">
    <property type="protein sequence ID" value="ABX29139.1"/>
    <property type="molecule type" value="Genomic_DNA"/>
</dbReference>
<dbReference type="RefSeq" id="WP_000578458.1">
    <property type="nucleotide sequence ID" value="NC_010079.1"/>
</dbReference>
<dbReference type="SMR" id="A8Z3M3"/>
<dbReference type="KEGG" id="sax:USA300HOU_1122"/>
<dbReference type="HOGENOM" id="CLU_023982_0_1_9"/>
<dbReference type="UniPathway" id="UPA00219"/>
<dbReference type="GO" id="GO:0005886">
    <property type="term" value="C:plasma membrane"/>
    <property type="evidence" value="ECO:0007669"/>
    <property type="project" value="UniProtKB-SubCell"/>
</dbReference>
<dbReference type="GO" id="GO:0046872">
    <property type="term" value="F:metal ion binding"/>
    <property type="evidence" value="ECO:0007669"/>
    <property type="project" value="UniProtKB-KW"/>
</dbReference>
<dbReference type="GO" id="GO:0008963">
    <property type="term" value="F:phospho-N-acetylmuramoyl-pentapeptide-transferase activity"/>
    <property type="evidence" value="ECO:0007669"/>
    <property type="project" value="UniProtKB-UniRule"/>
</dbReference>
<dbReference type="GO" id="GO:0051301">
    <property type="term" value="P:cell division"/>
    <property type="evidence" value="ECO:0007669"/>
    <property type="project" value="UniProtKB-KW"/>
</dbReference>
<dbReference type="GO" id="GO:0071555">
    <property type="term" value="P:cell wall organization"/>
    <property type="evidence" value="ECO:0007669"/>
    <property type="project" value="UniProtKB-KW"/>
</dbReference>
<dbReference type="GO" id="GO:0009252">
    <property type="term" value="P:peptidoglycan biosynthetic process"/>
    <property type="evidence" value="ECO:0007669"/>
    <property type="project" value="UniProtKB-UniRule"/>
</dbReference>
<dbReference type="GO" id="GO:0008360">
    <property type="term" value="P:regulation of cell shape"/>
    <property type="evidence" value="ECO:0007669"/>
    <property type="project" value="UniProtKB-KW"/>
</dbReference>
<dbReference type="CDD" id="cd06852">
    <property type="entry name" value="GT_MraY"/>
    <property type="match status" value="1"/>
</dbReference>
<dbReference type="HAMAP" id="MF_00038">
    <property type="entry name" value="MraY"/>
    <property type="match status" value="1"/>
</dbReference>
<dbReference type="InterPro" id="IPR000715">
    <property type="entry name" value="Glycosyl_transferase_4"/>
</dbReference>
<dbReference type="InterPro" id="IPR003524">
    <property type="entry name" value="PNAcMuramoyl-5peptid_Trfase"/>
</dbReference>
<dbReference type="InterPro" id="IPR018480">
    <property type="entry name" value="PNAcMuramoyl-5peptid_Trfase_CS"/>
</dbReference>
<dbReference type="NCBIfam" id="TIGR00445">
    <property type="entry name" value="mraY"/>
    <property type="match status" value="1"/>
</dbReference>
<dbReference type="PANTHER" id="PTHR22926">
    <property type="entry name" value="PHOSPHO-N-ACETYLMURAMOYL-PENTAPEPTIDE-TRANSFERASE"/>
    <property type="match status" value="1"/>
</dbReference>
<dbReference type="PANTHER" id="PTHR22926:SF5">
    <property type="entry name" value="PHOSPHO-N-ACETYLMURAMOYL-PENTAPEPTIDE-TRANSFERASE HOMOLOG"/>
    <property type="match status" value="1"/>
</dbReference>
<dbReference type="Pfam" id="PF00953">
    <property type="entry name" value="Glycos_transf_4"/>
    <property type="match status" value="1"/>
</dbReference>
<dbReference type="PROSITE" id="PS01347">
    <property type="entry name" value="MRAY_1"/>
    <property type="match status" value="1"/>
</dbReference>
<dbReference type="PROSITE" id="PS01348">
    <property type="entry name" value="MRAY_2"/>
    <property type="match status" value="1"/>
</dbReference>
<organism>
    <name type="scientific">Staphylococcus aureus (strain USA300 / TCH1516)</name>
    <dbReference type="NCBI Taxonomy" id="451516"/>
    <lineage>
        <taxon>Bacteria</taxon>
        <taxon>Bacillati</taxon>
        <taxon>Bacillota</taxon>
        <taxon>Bacilli</taxon>
        <taxon>Bacillales</taxon>
        <taxon>Staphylococcaceae</taxon>
        <taxon>Staphylococcus</taxon>
    </lineage>
</organism>
<sequence>MIFVYALLALVITFVLVPVLIPTLKRMKFGQSIREEGPQSHMKKTGTPTMGGLTFLLSIVITSLVAIIFVDQANPIILLLFVTIGFGLIGFIDDYIIVVKKNNQGLTSKQKFLAQIGIAIIFFVLSNVFHLVNFSTSIHIPFTNVAIPLSFAYVIFIVFWQVGFSNAVNLTDGLDGLATGLSIIGFTMYAIMSFVLGETAIGIFCIIMLFALLGFLPYNINPAKVFMGDTGSLALGGIFATISIMLNQELSLIFIGLVFVIETLSVMLQVASFKLTGKRIFKMSPIHHHFELIGWSEWKVVTVFWAVGLISGLIGLWIGVH</sequence>
<feature type="chain" id="PRO_1000074566" description="Phospho-N-acetylmuramoyl-pentapeptide-transferase">
    <location>
        <begin position="1"/>
        <end position="321"/>
    </location>
</feature>
<feature type="transmembrane region" description="Helical" evidence="1">
    <location>
        <begin position="1"/>
        <end position="21"/>
    </location>
</feature>
<feature type="transmembrane region" description="Helical" evidence="1">
    <location>
        <begin position="50"/>
        <end position="70"/>
    </location>
</feature>
<feature type="transmembrane region" description="Helical" evidence="1">
    <location>
        <begin position="76"/>
        <end position="96"/>
    </location>
</feature>
<feature type="transmembrane region" description="Helical" evidence="1">
    <location>
        <begin position="112"/>
        <end position="132"/>
    </location>
</feature>
<feature type="transmembrane region" description="Helical" evidence="1">
    <location>
        <begin position="140"/>
        <end position="160"/>
    </location>
</feature>
<feature type="transmembrane region" description="Helical" evidence="1">
    <location>
        <begin position="176"/>
        <end position="196"/>
    </location>
</feature>
<feature type="transmembrane region" description="Helical" evidence="1">
    <location>
        <begin position="200"/>
        <end position="220"/>
    </location>
</feature>
<feature type="transmembrane region" description="Helical" evidence="1">
    <location>
        <begin position="225"/>
        <end position="245"/>
    </location>
</feature>
<feature type="transmembrane region" description="Helical" evidence="1">
    <location>
        <begin position="250"/>
        <end position="270"/>
    </location>
</feature>
<feature type="transmembrane region" description="Helical" evidence="1">
    <location>
        <begin position="300"/>
        <end position="320"/>
    </location>
</feature>
<proteinExistence type="inferred from homology"/>